<sequence length="352" mass="38499">MQRYPTKQIKIRDVLIGGDAPISVQSMTFSKTKDVKGTLEQIQRLYFAGCDIVRCAVFDKEDASALKQIVAGSPIPVVADIHFNHTYALIVSEFVDAIRINPGNIGSAKNIKAVVDACKQRNLPIRIGVNSGSLEKRFEDRYGRTVEAMVESALYNIKLLEDFDFTDIKISLKSSDVERTMQAYRALRPKTNYPFHLGVTEAGTAFHATIKSAIALGGLLLEGIGDTMRVSITGELEEEIKVAKAILKDSGRQKEGLNIISCPTCGRLQADLMAAVKLVEEKTKDIKEPLNVSVMGCVVNAIGEAKGADVAIAFGKGNGMIMRHGEVVARLPESELVDRFLQEIDDEIKSRG</sequence>
<gene>
    <name evidence="1" type="primary">ispG</name>
    <name type="ordered locus">Ccon26_07210</name>
    <name type="ORF">CCC13826_0680</name>
</gene>
<accession>A7ZCT9</accession>
<keyword id="KW-0004">4Fe-4S</keyword>
<keyword id="KW-0408">Iron</keyword>
<keyword id="KW-0411">Iron-sulfur</keyword>
<keyword id="KW-0414">Isoprene biosynthesis</keyword>
<keyword id="KW-0479">Metal-binding</keyword>
<keyword id="KW-0560">Oxidoreductase</keyword>
<protein>
    <recommendedName>
        <fullName evidence="1">4-hydroxy-3-methylbut-2-en-1-yl diphosphate synthase (flavodoxin)</fullName>
        <ecNumber evidence="1">1.17.7.3</ecNumber>
    </recommendedName>
    <alternativeName>
        <fullName evidence="1">1-hydroxy-2-methyl-2-(E)-butenyl 4-diphosphate synthase</fullName>
    </alternativeName>
</protein>
<feature type="chain" id="PRO_1000071536" description="4-hydroxy-3-methylbut-2-en-1-yl diphosphate synthase (flavodoxin)">
    <location>
        <begin position="1"/>
        <end position="352"/>
    </location>
</feature>
<feature type="binding site" evidence="1">
    <location>
        <position position="262"/>
    </location>
    <ligand>
        <name>[4Fe-4S] cluster</name>
        <dbReference type="ChEBI" id="CHEBI:49883"/>
    </ligand>
</feature>
<feature type="binding site" evidence="1">
    <location>
        <position position="265"/>
    </location>
    <ligand>
        <name>[4Fe-4S] cluster</name>
        <dbReference type="ChEBI" id="CHEBI:49883"/>
    </ligand>
</feature>
<feature type="binding site" evidence="1">
    <location>
        <position position="297"/>
    </location>
    <ligand>
        <name>[4Fe-4S] cluster</name>
        <dbReference type="ChEBI" id="CHEBI:49883"/>
    </ligand>
</feature>
<feature type="binding site" evidence="1">
    <location>
        <position position="304"/>
    </location>
    <ligand>
        <name>[4Fe-4S] cluster</name>
        <dbReference type="ChEBI" id="CHEBI:49883"/>
    </ligand>
</feature>
<comment type="function">
    <text evidence="1">Converts 2C-methyl-D-erythritol 2,4-cyclodiphosphate (ME-2,4cPP) into 1-hydroxy-2-methyl-2-(E)-butenyl 4-diphosphate.</text>
</comment>
<comment type="catalytic activity">
    <reaction evidence="1">
        <text>(2E)-4-hydroxy-3-methylbut-2-enyl diphosphate + oxidized [flavodoxin] + H2O + 2 H(+) = 2-C-methyl-D-erythritol 2,4-cyclic diphosphate + reduced [flavodoxin]</text>
        <dbReference type="Rhea" id="RHEA:43604"/>
        <dbReference type="Rhea" id="RHEA-COMP:10622"/>
        <dbReference type="Rhea" id="RHEA-COMP:10623"/>
        <dbReference type="ChEBI" id="CHEBI:15377"/>
        <dbReference type="ChEBI" id="CHEBI:15378"/>
        <dbReference type="ChEBI" id="CHEBI:57618"/>
        <dbReference type="ChEBI" id="CHEBI:58210"/>
        <dbReference type="ChEBI" id="CHEBI:58483"/>
        <dbReference type="ChEBI" id="CHEBI:128753"/>
        <dbReference type="EC" id="1.17.7.3"/>
    </reaction>
</comment>
<comment type="cofactor">
    <cofactor evidence="1">
        <name>[4Fe-4S] cluster</name>
        <dbReference type="ChEBI" id="CHEBI:49883"/>
    </cofactor>
    <text evidence="1">Binds 1 [4Fe-4S] cluster.</text>
</comment>
<comment type="pathway">
    <text evidence="1">Isoprenoid biosynthesis; isopentenyl diphosphate biosynthesis via DXP pathway; isopentenyl diphosphate from 1-deoxy-D-xylulose 5-phosphate: step 5/6.</text>
</comment>
<comment type="similarity">
    <text evidence="1">Belongs to the IspG family.</text>
</comment>
<reference key="1">
    <citation type="submission" date="2007-10" db="EMBL/GenBank/DDBJ databases">
        <title>Genome sequence of Campylobacter concisus 13826 isolated from human feces.</title>
        <authorList>
            <person name="Fouts D.E."/>
            <person name="Mongodin E.F."/>
            <person name="Puiu D."/>
            <person name="Sebastian Y."/>
            <person name="Miller W.G."/>
            <person name="Mandrell R.E."/>
            <person name="On S."/>
            <person name="Nelson K.E."/>
        </authorList>
    </citation>
    <scope>NUCLEOTIDE SEQUENCE [LARGE SCALE GENOMIC DNA]</scope>
    <source>
        <strain>13826</strain>
    </source>
</reference>
<evidence type="ECO:0000255" key="1">
    <source>
        <dbReference type="HAMAP-Rule" id="MF_00159"/>
    </source>
</evidence>
<dbReference type="EC" id="1.17.7.3" evidence="1"/>
<dbReference type="EMBL" id="CP000792">
    <property type="protein sequence ID" value="EAT98050.1"/>
    <property type="molecule type" value="Genomic_DNA"/>
</dbReference>
<dbReference type="RefSeq" id="WP_012001553.1">
    <property type="nucleotide sequence ID" value="NC_009802.2"/>
</dbReference>
<dbReference type="SMR" id="A7ZCT9"/>
<dbReference type="STRING" id="360104.CCC13826_0680"/>
<dbReference type="KEGG" id="cco:CCC13826_0680"/>
<dbReference type="eggNOG" id="COG0821">
    <property type="taxonomic scope" value="Bacteria"/>
</dbReference>
<dbReference type="HOGENOM" id="CLU_042258_0_0_7"/>
<dbReference type="OrthoDB" id="9803214at2"/>
<dbReference type="UniPathway" id="UPA00056">
    <property type="reaction ID" value="UER00096"/>
</dbReference>
<dbReference type="Proteomes" id="UP000001121">
    <property type="component" value="Chromosome"/>
</dbReference>
<dbReference type="GO" id="GO:0051539">
    <property type="term" value="F:4 iron, 4 sulfur cluster binding"/>
    <property type="evidence" value="ECO:0007669"/>
    <property type="project" value="UniProtKB-UniRule"/>
</dbReference>
<dbReference type="GO" id="GO:0046429">
    <property type="term" value="F:4-hydroxy-3-methylbut-2-en-1-yl diphosphate synthase activity (ferredoxin)"/>
    <property type="evidence" value="ECO:0007669"/>
    <property type="project" value="UniProtKB-UniRule"/>
</dbReference>
<dbReference type="GO" id="GO:0141197">
    <property type="term" value="F:4-hydroxy-3-methylbut-2-enyl-diphosphate synthase activity (flavodoxin)"/>
    <property type="evidence" value="ECO:0007669"/>
    <property type="project" value="UniProtKB-EC"/>
</dbReference>
<dbReference type="GO" id="GO:0005506">
    <property type="term" value="F:iron ion binding"/>
    <property type="evidence" value="ECO:0007669"/>
    <property type="project" value="InterPro"/>
</dbReference>
<dbReference type="GO" id="GO:0019288">
    <property type="term" value="P:isopentenyl diphosphate biosynthetic process, methylerythritol 4-phosphate pathway"/>
    <property type="evidence" value="ECO:0007669"/>
    <property type="project" value="UniProtKB-UniRule"/>
</dbReference>
<dbReference type="GO" id="GO:0016114">
    <property type="term" value="P:terpenoid biosynthetic process"/>
    <property type="evidence" value="ECO:0007669"/>
    <property type="project" value="InterPro"/>
</dbReference>
<dbReference type="FunFam" id="3.20.20.20:FF:000001">
    <property type="entry name" value="4-hydroxy-3-methylbut-2-en-1-yl diphosphate synthase (flavodoxin)"/>
    <property type="match status" value="1"/>
</dbReference>
<dbReference type="Gene3D" id="3.20.20.20">
    <property type="entry name" value="Dihydropteroate synthase-like"/>
    <property type="match status" value="1"/>
</dbReference>
<dbReference type="Gene3D" id="3.30.413.10">
    <property type="entry name" value="Sulfite Reductase Hemoprotein, domain 1"/>
    <property type="match status" value="1"/>
</dbReference>
<dbReference type="HAMAP" id="MF_00159">
    <property type="entry name" value="IspG"/>
    <property type="match status" value="1"/>
</dbReference>
<dbReference type="InterPro" id="IPR011005">
    <property type="entry name" value="Dihydropteroate_synth-like_sf"/>
</dbReference>
<dbReference type="InterPro" id="IPR016425">
    <property type="entry name" value="IspG_bac"/>
</dbReference>
<dbReference type="InterPro" id="IPR004588">
    <property type="entry name" value="IspG_bac-typ"/>
</dbReference>
<dbReference type="InterPro" id="IPR045854">
    <property type="entry name" value="NO2/SO3_Rdtase_4Fe4S_sf"/>
</dbReference>
<dbReference type="NCBIfam" id="TIGR00612">
    <property type="entry name" value="ispG_gcpE"/>
    <property type="match status" value="1"/>
</dbReference>
<dbReference type="NCBIfam" id="NF001540">
    <property type="entry name" value="PRK00366.1"/>
    <property type="match status" value="1"/>
</dbReference>
<dbReference type="PANTHER" id="PTHR30454">
    <property type="entry name" value="4-HYDROXY-3-METHYLBUT-2-EN-1-YL DIPHOSPHATE SYNTHASE"/>
    <property type="match status" value="1"/>
</dbReference>
<dbReference type="PANTHER" id="PTHR30454:SF0">
    <property type="entry name" value="4-HYDROXY-3-METHYLBUT-2-EN-1-YL DIPHOSPHATE SYNTHASE (FERREDOXIN), CHLOROPLASTIC"/>
    <property type="match status" value="1"/>
</dbReference>
<dbReference type="Pfam" id="PF04551">
    <property type="entry name" value="GcpE"/>
    <property type="match status" value="1"/>
</dbReference>
<dbReference type="PIRSF" id="PIRSF004640">
    <property type="entry name" value="IspG"/>
    <property type="match status" value="1"/>
</dbReference>
<dbReference type="SUPFAM" id="SSF51717">
    <property type="entry name" value="Dihydropteroate synthetase-like"/>
    <property type="match status" value="1"/>
</dbReference>
<proteinExistence type="inferred from homology"/>
<name>ISPG_CAMC1</name>
<organism>
    <name type="scientific">Campylobacter concisus (strain 13826)</name>
    <dbReference type="NCBI Taxonomy" id="360104"/>
    <lineage>
        <taxon>Bacteria</taxon>
        <taxon>Pseudomonadati</taxon>
        <taxon>Campylobacterota</taxon>
        <taxon>Epsilonproteobacteria</taxon>
        <taxon>Campylobacterales</taxon>
        <taxon>Campylobacteraceae</taxon>
        <taxon>Campylobacter</taxon>
    </lineage>
</organism>